<gene>
    <name type="ORF">Pc13g02170</name>
</gene>
<feature type="chain" id="PRO_0000411731" description="Vacuolar membrane protease">
    <location>
        <begin position="1"/>
        <end position="987"/>
    </location>
</feature>
<feature type="topological domain" description="Cytoplasmic" evidence="1">
    <location>
        <begin position="1"/>
        <end position="14"/>
    </location>
</feature>
<feature type="transmembrane region" description="Helical; Name=1" evidence="3">
    <location>
        <begin position="15"/>
        <end position="35"/>
    </location>
</feature>
<feature type="topological domain" description="Vacuolar" evidence="1">
    <location>
        <begin position="36"/>
        <end position="384"/>
    </location>
</feature>
<feature type="transmembrane region" description="Helical; Name=2" evidence="3">
    <location>
        <begin position="385"/>
        <end position="405"/>
    </location>
</feature>
<feature type="topological domain" description="Cytoplasmic" evidence="1">
    <location>
        <begin position="406"/>
        <end position="435"/>
    </location>
</feature>
<feature type="transmembrane region" description="Helical; Name=3" evidence="3">
    <location>
        <begin position="436"/>
        <end position="456"/>
    </location>
</feature>
<feature type="topological domain" description="Vacuolar" evidence="1">
    <location>
        <begin position="457"/>
        <end position="466"/>
    </location>
</feature>
<feature type="transmembrane region" description="Helical; Name=4" evidence="3">
    <location>
        <begin position="467"/>
        <end position="487"/>
    </location>
</feature>
<feature type="topological domain" description="Cytoplasmic" evidence="1">
    <location>
        <begin position="488"/>
        <end position="501"/>
    </location>
</feature>
<feature type="transmembrane region" description="Helical; Name=5" evidence="3">
    <location>
        <begin position="502"/>
        <end position="522"/>
    </location>
</feature>
<feature type="topological domain" description="Vacuolar" evidence="1">
    <location>
        <begin position="523"/>
        <end position="526"/>
    </location>
</feature>
<feature type="transmembrane region" description="Helical; Name=6" evidence="3">
    <location>
        <begin position="527"/>
        <end position="547"/>
    </location>
</feature>
<feature type="topological domain" description="Cytoplasmic" evidence="1">
    <location>
        <begin position="548"/>
        <end position="649"/>
    </location>
</feature>
<feature type="transmembrane region" description="Helical; Name=7" evidence="3">
    <location>
        <begin position="650"/>
        <end position="670"/>
    </location>
</feature>
<feature type="topological domain" description="Vacuolar" evidence="1">
    <location>
        <begin position="671"/>
        <end position="686"/>
    </location>
</feature>
<feature type="transmembrane region" description="Helical; Name=8" evidence="3">
    <location>
        <begin position="687"/>
        <end position="707"/>
    </location>
</feature>
<feature type="topological domain" description="Cytoplasmic" evidence="1">
    <location>
        <begin position="708"/>
        <end position="715"/>
    </location>
</feature>
<feature type="transmembrane region" description="Helical; Name=9" evidence="3">
    <location>
        <begin position="716"/>
        <end position="736"/>
    </location>
</feature>
<feature type="topological domain" description="Vacuolar" evidence="1">
    <location>
        <begin position="737"/>
        <end position="987"/>
    </location>
</feature>
<feature type="region of interest" description="Disordered" evidence="5">
    <location>
        <begin position="572"/>
        <end position="600"/>
    </location>
</feature>
<feature type="active site" description="Proton acceptor" evidence="2">
    <location>
        <position position="213"/>
    </location>
</feature>
<feature type="binding site" evidence="2">
    <location>
        <position position="167"/>
    </location>
    <ligand>
        <name>Zn(2+)</name>
        <dbReference type="ChEBI" id="CHEBI:29105"/>
        <label>1</label>
        <note>catalytic</note>
    </ligand>
</feature>
<feature type="binding site" evidence="2">
    <location>
        <position position="179"/>
    </location>
    <ligand>
        <name>Zn(2+)</name>
        <dbReference type="ChEBI" id="CHEBI:29105"/>
        <label>1</label>
        <note>catalytic</note>
    </ligand>
</feature>
<feature type="binding site" evidence="2">
    <location>
        <position position="179"/>
    </location>
    <ligand>
        <name>Zn(2+)</name>
        <dbReference type="ChEBI" id="CHEBI:29105"/>
        <label>2</label>
        <note>catalytic</note>
    </ligand>
</feature>
<feature type="binding site" evidence="2">
    <location>
        <position position="214"/>
    </location>
    <ligand>
        <name>Zn(2+)</name>
        <dbReference type="ChEBI" id="CHEBI:29105"/>
        <label>2</label>
        <note>catalytic</note>
    </ligand>
</feature>
<feature type="binding site" evidence="2">
    <location>
        <position position="239"/>
    </location>
    <ligand>
        <name>Zn(2+)</name>
        <dbReference type="ChEBI" id="CHEBI:29105"/>
        <label>1</label>
        <note>catalytic</note>
    </ligand>
</feature>
<feature type="binding site" evidence="2">
    <location>
        <position position="312"/>
    </location>
    <ligand>
        <name>Zn(2+)</name>
        <dbReference type="ChEBI" id="CHEBI:29105"/>
        <label>2</label>
        <note>catalytic</note>
    </ligand>
</feature>
<feature type="site" description="Transition state stabilizer" evidence="2">
    <location>
        <position position="311"/>
    </location>
</feature>
<feature type="glycosylation site" description="N-linked (GlcNAc...) asparagine" evidence="4">
    <location>
        <position position="51"/>
    </location>
</feature>
<feature type="glycosylation site" description="N-linked (GlcNAc...) asparagine" evidence="4">
    <location>
        <position position="117"/>
    </location>
</feature>
<feature type="glycosylation site" description="N-linked (GlcNAc...) asparagine" evidence="4">
    <location>
        <position position="781"/>
    </location>
</feature>
<feature type="glycosylation site" description="N-linked (GlcNAc...) asparagine" evidence="4">
    <location>
        <position position="871"/>
    </location>
</feature>
<sequence>MATRKARNPLAFMPWPVTILTTAMYLALIIPLLVIHHNVPPAPRTSPNGLNLTEAWQDLQSLTKGFHPYNSHQNDEVRSWLLERIDAIKQSTPSTEEYRDAKEEKPDVFVFDDLVSNLTFIDKSVGVYFEGTNILVYIRGSEDNKQNWWETPGRAPVGKGGVLVNAHYDSVSTGYGATDDGVGVVTCLQLVKYFLTPGHAPRRGLVVLFNNGEEDYLNGARVYSQHPMARFAHTFLNLEGAGAGGRATLFRSSDTEVTQAYAKSEHPFGSVLSANGFEKGLISSQTDYVVLEGILGLRGLDVAFFEPRARYHTDQDDARHTSIDSLWHMLSTAVATTEELVSDTTDRFDGHIRDDGTVPSGSGTRAVWFDLFGSAFAVFRLHTLFALSVTLLIVAPLTLLVTSVILSRADKMYLFRSSVYSEINDDYIPLRGLRGFFRFPFLISIPTGVTVGLAYMVTKVNPFIAHSSSYAVWSMMISAWIFLAWFVSRVANSARPSAFHRVYTWTWMFVLTWSLMVVCTVYEHEEGLAGGYFIFFYFAGTFLATWISYLELFALPTKSEYVGRLAESRRPSTQGSRLAASGDEHQDDAAEEDPTESTSLLHGRHRPTFANYVRVGVDRASQDEEEEEEDPNVYEHEQGWSGVLPRWTWLLQLLITAPVILMLIVPLALLTTSALSQTGQDGSPQLLIYLFISCLTALLFAPMLPFIHRYTYHLPIFLLFVFIGTMIYNLVAFPFADSNRLKLFFLQEVDLDNGISTASLTGMPPFVSDVTYGLPSAAGQNESCDWTFRGKRKLQRCSWSAPLPHVVPDGDSLSVSSEDADSLLDATELSPDWISFSISHPQRDSSSVRFEVSGQNTRNCRINMDGNSITNFSVIGSSAPDHRFLNPSPDGLNRIQLWSRTWDNKWTVDVDFSKHDSSETDEVDESSITGRITCLWSDNNRVGLIPALDEVRQFSPAWVAVTKFSDGLIEGSRAFEIKRSSLGALGS</sequence>
<accession>B6H1I3</accession>
<organism>
    <name type="scientific">Penicillium rubens (strain ATCC 28089 / DSM 1075 / NRRL 1951 / Wisconsin 54-1255)</name>
    <name type="common">Penicillium chrysogenum</name>
    <dbReference type="NCBI Taxonomy" id="500485"/>
    <lineage>
        <taxon>Eukaryota</taxon>
        <taxon>Fungi</taxon>
        <taxon>Dikarya</taxon>
        <taxon>Ascomycota</taxon>
        <taxon>Pezizomycotina</taxon>
        <taxon>Eurotiomycetes</taxon>
        <taxon>Eurotiomycetidae</taxon>
        <taxon>Eurotiales</taxon>
        <taxon>Aspergillaceae</taxon>
        <taxon>Penicillium</taxon>
        <taxon>Penicillium chrysogenum species complex</taxon>
    </lineage>
</organism>
<evidence type="ECO:0000250" key="1">
    <source>
        <dbReference type="UniProtKB" id="P38244"/>
    </source>
</evidence>
<evidence type="ECO:0000250" key="2">
    <source>
        <dbReference type="UniProtKB" id="P80561"/>
    </source>
</evidence>
<evidence type="ECO:0000255" key="3"/>
<evidence type="ECO:0000255" key="4">
    <source>
        <dbReference type="PROSITE-ProRule" id="PRU00498"/>
    </source>
</evidence>
<evidence type="ECO:0000256" key="5">
    <source>
        <dbReference type="SAM" id="MobiDB-lite"/>
    </source>
</evidence>
<evidence type="ECO:0000305" key="6"/>
<comment type="function">
    <text evidence="1">May be involved in vacuolar sorting and osmoregulation.</text>
</comment>
<comment type="cofactor">
    <cofactor evidence="2">
        <name>Zn(2+)</name>
        <dbReference type="ChEBI" id="CHEBI:29105"/>
    </cofactor>
    <text evidence="2">Binds 2 Zn(2+) ions per subunit.</text>
</comment>
<comment type="subcellular location">
    <subcellularLocation>
        <location evidence="1">Vacuole membrane</location>
        <topology evidence="3">Multi-pass membrane protein</topology>
    </subcellularLocation>
</comment>
<comment type="similarity">
    <text evidence="6">Belongs to the peptidase M28 family.</text>
</comment>
<name>PFF1_PENRW</name>
<proteinExistence type="inferred from homology"/>
<dbReference type="EC" id="3.4.-.-" evidence="6"/>
<dbReference type="EMBL" id="AM920428">
    <property type="protein sequence ID" value="CAP91286.1"/>
    <property type="molecule type" value="Genomic_DNA"/>
</dbReference>
<dbReference type="RefSeq" id="XP_002558658.1">
    <property type="nucleotide sequence ID" value="XM_002558612.1"/>
</dbReference>
<dbReference type="SMR" id="B6H1I3"/>
<dbReference type="STRING" id="500485.B6H1I3"/>
<dbReference type="GeneID" id="8307825"/>
<dbReference type="KEGG" id="pcs:N7525_000298"/>
<dbReference type="VEuPathDB" id="FungiDB:PCH_Pc13g02170"/>
<dbReference type="eggNOG" id="KOG2194">
    <property type="taxonomic scope" value="Eukaryota"/>
</dbReference>
<dbReference type="HOGENOM" id="CLU_006412_1_0_1"/>
<dbReference type="OMA" id="TPWPVTI"/>
<dbReference type="OrthoDB" id="76293at2759"/>
<dbReference type="BioCyc" id="PCHR:PC13G02170-MONOMER"/>
<dbReference type="Proteomes" id="UP000000724">
    <property type="component" value="Contig Pc00c13"/>
</dbReference>
<dbReference type="GO" id="GO:0005774">
    <property type="term" value="C:vacuolar membrane"/>
    <property type="evidence" value="ECO:0007669"/>
    <property type="project" value="UniProtKB-SubCell"/>
</dbReference>
<dbReference type="GO" id="GO:0046872">
    <property type="term" value="F:metal ion binding"/>
    <property type="evidence" value="ECO:0007669"/>
    <property type="project" value="UniProtKB-KW"/>
</dbReference>
<dbReference type="GO" id="GO:0008235">
    <property type="term" value="F:metalloexopeptidase activity"/>
    <property type="evidence" value="ECO:0007669"/>
    <property type="project" value="InterPro"/>
</dbReference>
<dbReference type="GO" id="GO:0006508">
    <property type="term" value="P:proteolysis"/>
    <property type="evidence" value="ECO:0007669"/>
    <property type="project" value="UniProtKB-KW"/>
</dbReference>
<dbReference type="CDD" id="cd03875">
    <property type="entry name" value="M28_Fxna_like"/>
    <property type="match status" value="1"/>
</dbReference>
<dbReference type="FunFam" id="3.40.630.10:FF:000057">
    <property type="entry name" value="Vacuolar membrane protease"/>
    <property type="match status" value="1"/>
</dbReference>
<dbReference type="Gene3D" id="3.40.630.10">
    <property type="entry name" value="Zn peptidases"/>
    <property type="match status" value="1"/>
</dbReference>
<dbReference type="InterPro" id="IPR048024">
    <property type="entry name" value="Fxna-like_M28_dom"/>
</dbReference>
<dbReference type="InterPro" id="IPR045175">
    <property type="entry name" value="M28_fam"/>
</dbReference>
<dbReference type="InterPro" id="IPR007484">
    <property type="entry name" value="Peptidase_M28"/>
</dbReference>
<dbReference type="InterPro" id="IPR053975">
    <property type="entry name" value="PFF1_C"/>
</dbReference>
<dbReference type="InterPro" id="IPR053976">
    <property type="entry name" value="PFF1_TM"/>
</dbReference>
<dbReference type="PANTHER" id="PTHR12147">
    <property type="entry name" value="METALLOPEPTIDASE M28 FAMILY MEMBER"/>
    <property type="match status" value="1"/>
</dbReference>
<dbReference type="PANTHER" id="PTHR12147:SF58">
    <property type="entry name" value="VACUOLAR MEMBRANE PROTEASE"/>
    <property type="match status" value="1"/>
</dbReference>
<dbReference type="Pfam" id="PF04389">
    <property type="entry name" value="Peptidase_M28"/>
    <property type="match status" value="1"/>
</dbReference>
<dbReference type="Pfam" id="PF22250">
    <property type="entry name" value="PFF1_C"/>
    <property type="match status" value="1"/>
</dbReference>
<dbReference type="Pfam" id="PF22251">
    <property type="entry name" value="PFF1_TM"/>
    <property type="match status" value="1"/>
</dbReference>
<dbReference type="SUPFAM" id="SSF53187">
    <property type="entry name" value="Zn-dependent exopeptidases"/>
    <property type="match status" value="1"/>
</dbReference>
<keyword id="KW-0325">Glycoprotein</keyword>
<keyword id="KW-0378">Hydrolase</keyword>
<keyword id="KW-0472">Membrane</keyword>
<keyword id="KW-0479">Metal-binding</keyword>
<keyword id="KW-0482">Metalloprotease</keyword>
<keyword id="KW-0645">Protease</keyword>
<keyword id="KW-1185">Reference proteome</keyword>
<keyword id="KW-0812">Transmembrane</keyword>
<keyword id="KW-1133">Transmembrane helix</keyword>
<keyword id="KW-0926">Vacuole</keyword>
<keyword id="KW-0862">Zinc</keyword>
<protein>
    <recommendedName>
        <fullName evidence="1">Vacuolar membrane protease</fullName>
        <ecNumber evidence="6">3.4.-.-</ecNumber>
    </recommendedName>
    <alternativeName>
        <fullName evidence="1">FXNA-related family protease 1</fullName>
    </alternativeName>
</protein>
<reference key="1">
    <citation type="journal article" date="2008" name="Nat. Biotechnol.">
        <title>Genome sequencing and analysis of the filamentous fungus Penicillium chrysogenum.</title>
        <authorList>
            <person name="van den Berg M.A."/>
            <person name="Albang R."/>
            <person name="Albermann K."/>
            <person name="Badger J.H."/>
            <person name="Daran J.-M."/>
            <person name="Driessen A.J.M."/>
            <person name="Garcia-Estrada C."/>
            <person name="Fedorova N.D."/>
            <person name="Harris D.M."/>
            <person name="Heijne W.H.M."/>
            <person name="Joardar V.S."/>
            <person name="Kiel J.A.K.W."/>
            <person name="Kovalchuk A."/>
            <person name="Martin J.F."/>
            <person name="Nierman W.C."/>
            <person name="Nijland J.G."/>
            <person name="Pronk J.T."/>
            <person name="Roubos J.A."/>
            <person name="van der Klei I.J."/>
            <person name="van Peij N.N.M.E."/>
            <person name="Veenhuis M."/>
            <person name="von Doehren H."/>
            <person name="Wagner C."/>
            <person name="Wortman J.R."/>
            <person name="Bovenberg R.A.L."/>
        </authorList>
    </citation>
    <scope>NUCLEOTIDE SEQUENCE [LARGE SCALE GENOMIC DNA]</scope>
    <source>
        <strain>ATCC 28089 / DSM 1075 / NRRL 1951 / Wisconsin 54-1255</strain>
    </source>
</reference>